<gene>
    <name evidence="1" type="primary">arcA</name>
    <name type="ordered locus">Bcer98_0348</name>
</gene>
<evidence type="ECO:0000255" key="1">
    <source>
        <dbReference type="HAMAP-Rule" id="MF_00242"/>
    </source>
</evidence>
<protein>
    <recommendedName>
        <fullName evidence="1">Arginine deiminase</fullName>
        <shortName evidence="1">ADI</shortName>
        <ecNumber evidence="1">3.5.3.6</ecNumber>
    </recommendedName>
    <alternativeName>
        <fullName evidence="1">Arginine dihydrolase</fullName>
        <shortName evidence="1">AD</shortName>
    </alternativeName>
</protein>
<dbReference type="EC" id="3.5.3.6" evidence="1"/>
<dbReference type="EMBL" id="CP000764">
    <property type="protein sequence ID" value="ABS20706.1"/>
    <property type="molecule type" value="Genomic_DNA"/>
</dbReference>
<dbReference type="RefSeq" id="WP_011983464.1">
    <property type="nucleotide sequence ID" value="NC_009674.1"/>
</dbReference>
<dbReference type="SMR" id="A7GKP8"/>
<dbReference type="STRING" id="315749.Bcer98_0348"/>
<dbReference type="GeneID" id="33895700"/>
<dbReference type="KEGG" id="bcy:Bcer98_0348"/>
<dbReference type="eggNOG" id="COG2235">
    <property type="taxonomic scope" value="Bacteria"/>
</dbReference>
<dbReference type="HOGENOM" id="CLU_052662_0_1_9"/>
<dbReference type="OrthoDB" id="9807502at2"/>
<dbReference type="UniPathway" id="UPA00254">
    <property type="reaction ID" value="UER00364"/>
</dbReference>
<dbReference type="Proteomes" id="UP000002300">
    <property type="component" value="Chromosome"/>
</dbReference>
<dbReference type="GO" id="GO:0005737">
    <property type="term" value="C:cytoplasm"/>
    <property type="evidence" value="ECO:0007669"/>
    <property type="project" value="UniProtKB-SubCell"/>
</dbReference>
<dbReference type="GO" id="GO:0016990">
    <property type="term" value="F:arginine deiminase activity"/>
    <property type="evidence" value="ECO:0007669"/>
    <property type="project" value="UniProtKB-UniRule"/>
</dbReference>
<dbReference type="GO" id="GO:0019547">
    <property type="term" value="P:arginine catabolic process to ornithine"/>
    <property type="evidence" value="ECO:0007669"/>
    <property type="project" value="UniProtKB-UniRule"/>
</dbReference>
<dbReference type="GO" id="GO:0019546">
    <property type="term" value="P:arginine deiminase pathway"/>
    <property type="evidence" value="ECO:0007669"/>
    <property type="project" value="TreeGrafter"/>
</dbReference>
<dbReference type="FunFam" id="1.10.3930.10:FF:000001">
    <property type="entry name" value="Arginine deiminase"/>
    <property type="match status" value="1"/>
</dbReference>
<dbReference type="Gene3D" id="1.10.3930.10">
    <property type="entry name" value="Arginine deiminase"/>
    <property type="match status" value="1"/>
</dbReference>
<dbReference type="Gene3D" id="3.75.10.10">
    <property type="entry name" value="L-arginine/glycine Amidinotransferase, Chain A"/>
    <property type="match status" value="1"/>
</dbReference>
<dbReference type="HAMAP" id="MF_00242">
    <property type="entry name" value="Arg_deiminase"/>
    <property type="match status" value="1"/>
</dbReference>
<dbReference type="InterPro" id="IPR003876">
    <property type="entry name" value="Arg_deiminase"/>
</dbReference>
<dbReference type="NCBIfam" id="TIGR01078">
    <property type="entry name" value="arcA"/>
    <property type="match status" value="1"/>
</dbReference>
<dbReference type="NCBIfam" id="NF002381">
    <property type="entry name" value="PRK01388.1"/>
    <property type="match status" value="1"/>
</dbReference>
<dbReference type="PANTHER" id="PTHR47271">
    <property type="entry name" value="ARGININE DEIMINASE"/>
    <property type="match status" value="1"/>
</dbReference>
<dbReference type="PANTHER" id="PTHR47271:SF2">
    <property type="entry name" value="ARGININE DEIMINASE"/>
    <property type="match status" value="1"/>
</dbReference>
<dbReference type="Pfam" id="PF02274">
    <property type="entry name" value="ADI"/>
    <property type="match status" value="1"/>
</dbReference>
<dbReference type="PIRSF" id="PIRSF006356">
    <property type="entry name" value="Arg_deiminase"/>
    <property type="match status" value="1"/>
</dbReference>
<dbReference type="PRINTS" id="PR01466">
    <property type="entry name" value="ARGDEIMINASE"/>
</dbReference>
<dbReference type="SUPFAM" id="SSF55909">
    <property type="entry name" value="Pentein"/>
    <property type="match status" value="1"/>
</dbReference>
<feature type="chain" id="PRO_1000078363" description="Arginine deiminase">
    <location>
        <begin position="1"/>
        <end position="410"/>
    </location>
</feature>
<feature type="active site" description="Amidino-cysteine intermediate" evidence="1">
    <location>
        <position position="400"/>
    </location>
</feature>
<keyword id="KW-0056">Arginine metabolism</keyword>
<keyword id="KW-0963">Cytoplasm</keyword>
<keyword id="KW-0378">Hydrolase</keyword>
<organism>
    <name type="scientific">Bacillus cytotoxicus (strain DSM 22905 / CIP 110041 / 391-98 / NVH 391-98)</name>
    <dbReference type="NCBI Taxonomy" id="315749"/>
    <lineage>
        <taxon>Bacteria</taxon>
        <taxon>Bacillati</taxon>
        <taxon>Bacillota</taxon>
        <taxon>Bacilli</taxon>
        <taxon>Bacillales</taxon>
        <taxon>Bacillaceae</taxon>
        <taxon>Bacillus</taxon>
        <taxon>Bacillus cereus group</taxon>
    </lineage>
</organism>
<reference key="1">
    <citation type="journal article" date="2008" name="Chem. Biol. Interact.">
        <title>Extending the Bacillus cereus group genomics to putative food-borne pathogens of different toxicity.</title>
        <authorList>
            <person name="Lapidus A."/>
            <person name="Goltsman E."/>
            <person name="Auger S."/>
            <person name="Galleron N."/>
            <person name="Segurens B."/>
            <person name="Dossat C."/>
            <person name="Land M.L."/>
            <person name="Broussolle V."/>
            <person name="Brillard J."/>
            <person name="Guinebretiere M.-H."/>
            <person name="Sanchis V."/>
            <person name="Nguen-the C."/>
            <person name="Lereclus D."/>
            <person name="Richardson P."/>
            <person name="Wincker P."/>
            <person name="Weissenbach J."/>
            <person name="Ehrlich S.D."/>
            <person name="Sorokin A."/>
        </authorList>
    </citation>
    <scope>NUCLEOTIDE SEQUENCE [LARGE SCALE GENOMIC DNA]</scope>
    <source>
        <strain>DSM 22905 / CIP 110041 / 391-98 / NVH 391-98</strain>
    </source>
</reference>
<sequence>MKHPIHVTSEIGELQTVLLKRPGKELENLTPDYLQQLLFDDIPYLPIVQKEHDYFAQTLRNRGVEVLYLETLAAEALTDKKLREEFVNRILKEGQADANVAHQTLKEYLLSFSNEELIQKIMGGVRKNEIDTSQKTHLYELMEDHYPFYLDPMPNLYFTRDPAATIGEGVTINKMREPARRRESLFIEYIMKYHPRFANHNVPVWLNRDYKFPIEGGDELILNEETVAIGVSARTSAKAIERLAKNLFSRQNKIKKVLAIEIPKCRAFMHLDTVFTMVDYDKFTIHPAIQGPKGNMNIYILEKGLDEETLKITHRTSLMEVLKEVLGLQELVLIPCGGGDVIASAREQWNDGSNTLAIAPGVVVTYDRNYVSNALLREHGIEVIEVLSSELSRGRGGPRCMSMPIVRKDI</sequence>
<accession>A7GKP8</accession>
<proteinExistence type="inferred from homology"/>
<name>ARCA_BACCN</name>
<comment type="catalytic activity">
    <reaction evidence="1">
        <text>L-arginine + H2O = L-citrulline + NH4(+)</text>
        <dbReference type="Rhea" id="RHEA:19597"/>
        <dbReference type="ChEBI" id="CHEBI:15377"/>
        <dbReference type="ChEBI" id="CHEBI:28938"/>
        <dbReference type="ChEBI" id="CHEBI:32682"/>
        <dbReference type="ChEBI" id="CHEBI:57743"/>
        <dbReference type="EC" id="3.5.3.6"/>
    </reaction>
</comment>
<comment type="pathway">
    <text evidence="1">Amino-acid degradation; L-arginine degradation via ADI pathway; carbamoyl phosphate from L-arginine: step 1/2.</text>
</comment>
<comment type="subcellular location">
    <subcellularLocation>
        <location evidence="1">Cytoplasm</location>
    </subcellularLocation>
</comment>
<comment type="similarity">
    <text evidence="1">Belongs to the arginine deiminase family.</text>
</comment>